<proteinExistence type="inferred from homology"/>
<feature type="chain" id="PRO_1000139727" description="HTH-type transcriptional repressor NanR">
    <location>
        <begin position="1"/>
        <end position="263"/>
    </location>
</feature>
<feature type="domain" description="HTH gntR-type" evidence="1">
    <location>
        <begin position="30"/>
        <end position="98"/>
    </location>
</feature>
<feature type="DNA-binding region" description="H-T-H motif" evidence="1">
    <location>
        <begin position="58"/>
        <end position="77"/>
    </location>
</feature>
<feature type="region of interest" description="Disordered" evidence="2">
    <location>
        <begin position="1"/>
        <end position="25"/>
    </location>
</feature>
<gene>
    <name evidence="1" type="primary">nanR</name>
    <name type="ordered locus">SSPA2995</name>
</gene>
<reference key="1">
    <citation type="journal article" date="2009" name="BMC Genomics">
        <title>Pseudogene accumulation in the evolutionary histories of Salmonella enterica serovars Paratyphi A and Typhi.</title>
        <authorList>
            <person name="Holt K.E."/>
            <person name="Thomson N.R."/>
            <person name="Wain J."/>
            <person name="Langridge G.C."/>
            <person name="Hasan R."/>
            <person name="Bhutta Z.A."/>
            <person name="Quail M.A."/>
            <person name="Norbertczak H."/>
            <person name="Walker D."/>
            <person name="Simmonds M."/>
            <person name="White B."/>
            <person name="Bason N."/>
            <person name="Mungall K."/>
            <person name="Dougan G."/>
            <person name="Parkhill J."/>
        </authorList>
    </citation>
    <scope>NUCLEOTIDE SEQUENCE [LARGE SCALE GENOMIC DNA]</scope>
    <source>
        <strain>AKU_12601</strain>
    </source>
</reference>
<accession>B5BGP6</accession>
<name>NANR_SALPK</name>
<sequence>MDVMNAFDSQAEDSPTSLGRSLRRRPLARKKLSEMVEEELEQMIRRHEFGEGEQLPSERELMAFFNVGRPSVREALAALKRKGLVQINNGERARVSRPSADTIISELSGMAKDFLTHPGGIAHFEQLRLFFESSLVRYAAEHATDEQIALLTKALEINSQSLDDNALFIRSDVEFHRVLAEIPGNPIFMAIHVALLDWLIAARPSVPDRELHEHNNVSYQQHIVIVDAIRQRDPDKADRALQTHLNSVSATWHALGKKSQKMR</sequence>
<evidence type="ECO:0000255" key="1">
    <source>
        <dbReference type="HAMAP-Rule" id="MF_01236"/>
    </source>
</evidence>
<evidence type="ECO:0000256" key="2">
    <source>
        <dbReference type="SAM" id="MobiDB-lite"/>
    </source>
</evidence>
<protein>
    <recommendedName>
        <fullName evidence="1">HTH-type transcriptional repressor NanR</fullName>
    </recommendedName>
</protein>
<dbReference type="EMBL" id="FM200053">
    <property type="protein sequence ID" value="CAR61244.1"/>
    <property type="molecule type" value="Genomic_DNA"/>
</dbReference>
<dbReference type="RefSeq" id="WP_000382926.1">
    <property type="nucleotide sequence ID" value="NC_011147.1"/>
</dbReference>
<dbReference type="SMR" id="B5BGP6"/>
<dbReference type="KEGG" id="sek:SSPA2995"/>
<dbReference type="HOGENOM" id="CLU_017584_9_1_6"/>
<dbReference type="Proteomes" id="UP000001869">
    <property type="component" value="Chromosome"/>
</dbReference>
<dbReference type="GO" id="GO:0003677">
    <property type="term" value="F:DNA binding"/>
    <property type="evidence" value="ECO:0007669"/>
    <property type="project" value="UniProtKB-KW"/>
</dbReference>
<dbReference type="GO" id="GO:0003700">
    <property type="term" value="F:DNA-binding transcription factor activity"/>
    <property type="evidence" value="ECO:0007669"/>
    <property type="project" value="UniProtKB-UniRule"/>
</dbReference>
<dbReference type="GO" id="GO:0045892">
    <property type="term" value="P:negative regulation of DNA-templated transcription"/>
    <property type="evidence" value="ECO:0007669"/>
    <property type="project" value="UniProtKB-UniRule"/>
</dbReference>
<dbReference type="CDD" id="cd07377">
    <property type="entry name" value="WHTH_GntR"/>
    <property type="match status" value="1"/>
</dbReference>
<dbReference type="FunFam" id="1.10.10.10:FF:000150">
    <property type="entry name" value="HTH-type transcriptional repressor NanR"/>
    <property type="match status" value="1"/>
</dbReference>
<dbReference type="Gene3D" id="1.20.120.530">
    <property type="entry name" value="GntR ligand-binding domain-like"/>
    <property type="match status" value="1"/>
</dbReference>
<dbReference type="Gene3D" id="1.10.10.10">
    <property type="entry name" value="Winged helix-like DNA-binding domain superfamily/Winged helix DNA-binding domain"/>
    <property type="match status" value="1"/>
</dbReference>
<dbReference type="HAMAP" id="MF_01236">
    <property type="entry name" value="HTH_NanR"/>
    <property type="match status" value="1"/>
</dbReference>
<dbReference type="InterPro" id="IPR011711">
    <property type="entry name" value="GntR_C"/>
</dbReference>
<dbReference type="InterPro" id="IPR008920">
    <property type="entry name" value="TF_FadR/GntR_C"/>
</dbReference>
<dbReference type="InterPro" id="IPR000524">
    <property type="entry name" value="Tscrpt_reg_HTH_GntR"/>
</dbReference>
<dbReference type="InterPro" id="IPR023730">
    <property type="entry name" value="Tscrpt_reg_NanR"/>
</dbReference>
<dbReference type="InterPro" id="IPR036388">
    <property type="entry name" value="WH-like_DNA-bd_sf"/>
</dbReference>
<dbReference type="InterPro" id="IPR036390">
    <property type="entry name" value="WH_DNA-bd_sf"/>
</dbReference>
<dbReference type="NCBIfam" id="NF003011">
    <property type="entry name" value="PRK03837.1"/>
    <property type="match status" value="1"/>
</dbReference>
<dbReference type="PANTHER" id="PTHR43537:SF53">
    <property type="entry name" value="HTH-TYPE TRANSCRIPTIONAL REPRESSOR NANR"/>
    <property type="match status" value="1"/>
</dbReference>
<dbReference type="PANTHER" id="PTHR43537">
    <property type="entry name" value="TRANSCRIPTIONAL REGULATOR, GNTR FAMILY"/>
    <property type="match status" value="1"/>
</dbReference>
<dbReference type="Pfam" id="PF07729">
    <property type="entry name" value="FCD"/>
    <property type="match status" value="1"/>
</dbReference>
<dbReference type="Pfam" id="PF00392">
    <property type="entry name" value="GntR"/>
    <property type="match status" value="1"/>
</dbReference>
<dbReference type="PRINTS" id="PR00035">
    <property type="entry name" value="HTHGNTR"/>
</dbReference>
<dbReference type="SMART" id="SM00895">
    <property type="entry name" value="FCD"/>
    <property type="match status" value="1"/>
</dbReference>
<dbReference type="SMART" id="SM00345">
    <property type="entry name" value="HTH_GNTR"/>
    <property type="match status" value="1"/>
</dbReference>
<dbReference type="SUPFAM" id="SSF48008">
    <property type="entry name" value="GntR ligand-binding domain-like"/>
    <property type="match status" value="1"/>
</dbReference>
<dbReference type="SUPFAM" id="SSF46785">
    <property type="entry name" value="Winged helix' DNA-binding domain"/>
    <property type="match status" value="1"/>
</dbReference>
<dbReference type="PROSITE" id="PS50949">
    <property type="entry name" value="HTH_GNTR"/>
    <property type="match status" value="1"/>
</dbReference>
<comment type="function">
    <text evidence="1">Transcriptional repressor that controls expression of the genes required for the catabolism of sialic acids.</text>
</comment>
<comment type="similarity">
    <text evidence="1">Belongs to the NanR family.</text>
</comment>
<keyword id="KW-0238">DNA-binding</keyword>
<keyword id="KW-0678">Repressor</keyword>
<keyword id="KW-0804">Transcription</keyword>
<keyword id="KW-0805">Transcription regulation</keyword>
<organism>
    <name type="scientific">Salmonella paratyphi A (strain AKU_12601)</name>
    <dbReference type="NCBI Taxonomy" id="554290"/>
    <lineage>
        <taxon>Bacteria</taxon>
        <taxon>Pseudomonadati</taxon>
        <taxon>Pseudomonadota</taxon>
        <taxon>Gammaproteobacteria</taxon>
        <taxon>Enterobacterales</taxon>
        <taxon>Enterobacteriaceae</taxon>
        <taxon>Salmonella</taxon>
    </lineage>
</organism>